<sequence>MKNFVAGAQSGRKIQSGGCAIHCQDCSISQLCIPFTLNEQELDQLDNIIERKKPIQKSQVLFKAGDSLNSIYAIRSGTIKSYTISESGEEQITSFHLPGDLVGFDAITQMQHPSFAQALETAMVCEIPFDILDDLAGKMPKLRQQILRLMSSEIKSDQEMILLLSKMNAEERLAAFIHNLSKRYSARGFSAREFRLTMTRGDIGNYLGLTVETISRLLGRFQKLGVISVQGKYITINDLNGLIELTGTNKTKITLVK</sequence>
<evidence type="ECO:0000250" key="1"/>
<evidence type="ECO:0000255" key="2"/>
<evidence type="ECO:0000255" key="3">
    <source>
        <dbReference type="PROSITE-ProRule" id="PRU00387"/>
    </source>
</evidence>
<evidence type="ECO:0000305" key="4"/>
<comment type="function">
    <text>It is involved in the activation of genes necessary for anaerobic respiration.</text>
</comment>
<comment type="cofactor">
    <cofactor evidence="1">
        <name>[4Fe-4S] cluster</name>
        <dbReference type="ChEBI" id="CHEBI:49883"/>
    </cofactor>
    <text evidence="1">Binds 1 [4Fe-4S] cluster per subunit.</text>
</comment>
<comment type="subunit">
    <text evidence="1">Homodimer.</text>
</comment>
<comment type="subcellular location">
    <subcellularLocation>
        <location evidence="4">Cytoplasm</location>
    </subcellularLocation>
</comment>
<reference key="1">
    <citation type="journal article" date="1995" name="Science">
        <title>Whole-genome random sequencing and assembly of Haemophilus influenzae Rd.</title>
        <authorList>
            <person name="Fleischmann R.D."/>
            <person name="Adams M.D."/>
            <person name="White O."/>
            <person name="Clayton R.A."/>
            <person name="Kirkness E.F."/>
            <person name="Kerlavage A.R."/>
            <person name="Bult C.J."/>
            <person name="Tomb J.-F."/>
            <person name="Dougherty B.A."/>
            <person name="Merrick J.M."/>
            <person name="McKenney K."/>
            <person name="Sutton G.G."/>
            <person name="FitzHugh W."/>
            <person name="Fields C.A."/>
            <person name="Gocayne J.D."/>
            <person name="Scott J.D."/>
            <person name="Shirley R."/>
            <person name="Liu L.-I."/>
            <person name="Glodek A."/>
            <person name="Kelley J.M."/>
            <person name="Weidman J.F."/>
            <person name="Phillips C.A."/>
            <person name="Spriggs T."/>
            <person name="Hedblom E."/>
            <person name="Cotton M.D."/>
            <person name="Utterback T.R."/>
            <person name="Hanna M.C."/>
            <person name="Nguyen D.T."/>
            <person name="Saudek D.M."/>
            <person name="Brandon R.C."/>
            <person name="Fine L.D."/>
            <person name="Fritchman J.L."/>
            <person name="Fuhrmann J.L."/>
            <person name="Geoghagen N.S.M."/>
            <person name="Gnehm C.L."/>
            <person name="McDonald L.A."/>
            <person name="Small K.V."/>
            <person name="Fraser C.M."/>
            <person name="Smith H.O."/>
            <person name="Venter J.C."/>
        </authorList>
    </citation>
    <scope>NUCLEOTIDE SEQUENCE [LARGE SCALE GENOMIC DNA]</scope>
    <source>
        <strain>ATCC 51907 / DSM 11121 / KW20 / Rd</strain>
    </source>
</reference>
<protein>
    <recommendedName>
        <fullName>Anaerobic regulatory protein</fullName>
    </recommendedName>
</protein>
<keyword id="KW-0004">4Fe-4S</keyword>
<keyword id="KW-0010">Activator</keyword>
<keyword id="KW-0963">Cytoplasm</keyword>
<keyword id="KW-0238">DNA-binding</keyword>
<keyword id="KW-0408">Iron</keyword>
<keyword id="KW-0411">Iron-sulfur</keyword>
<keyword id="KW-0479">Metal-binding</keyword>
<keyword id="KW-1185">Reference proteome</keyword>
<keyword id="KW-0678">Repressor</keyword>
<keyword id="KW-0804">Transcription</keyword>
<keyword id="KW-0805">Transcription regulation</keyword>
<accession>P45199</accession>
<proteinExistence type="inferred from homology"/>
<gene>
    <name type="primary">fnr</name>
    <name type="ordered locus">HI_1425</name>
</gene>
<feature type="chain" id="PRO_0000100177" description="Anaerobic regulatory protein">
    <location>
        <begin position="1"/>
        <end position="257"/>
    </location>
</feature>
<feature type="domain" description="HTH crp-type" evidence="3">
    <location>
        <begin position="167"/>
        <end position="240"/>
    </location>
</feature>
<feature type="DNA-binding region" description="H-T-H motif" evidence="3">
    <location>
        <begin position="200"/>
        <end position="219"/>
    </location>
</feature>
<feature type="region of interest" description="Essential for the oxygen-regulated activity" evidence="1">
    <location>
        <begin position="23"/>
        <end position="32"/>
    </location>
</feature>
<feature type="region of interest" description="Dimerization" evidence="2">
    <location>
        <begin position="143"/>
        <end position="162"/>
    </location>
</feature>
<feature type="binding site" evidence="2">
    <location>
        <position position="23"/>
    </location>
    <ligand>
        <name>[4Fe-4S] cluster</name>
        <dbReference type="ChEBI" id="CHEBI:49883"/>
    </ligand>
</feature>
<feature type="binding site" evidence="2">
    <location>
        <position position="26"/>
    </location>
    <ligand>
        <name>[4Fe-4S] cluster</name>
        <dbReference type="ChEBI" id="CHEBI:49883"/>
    </ligand>
</feature>
<feature type="binding site" evidence="2">
    <location>
        <position position="32"/>
    </location>
    <ligand>
        <name>[4Fe-4S] cluster</name>
        <dbReference type="ChEBI" id="CHEBI:49883"/>
    </ligand>
</feature>
<feature type="binding site" evidence="2">
    <location>
        <position position="125"/>
    </location>
    <ligand>
        <name>[4Fe-4S] cluster</name>
        <dbReference type="ChEBI" id="CHEBI:49883"/>
    </ligand>
</feature>
<dbReference type="EMBL" id="L42023">
    <property type="protein sequence ID" value="AAC23062.1"/>
    <property type="molecule type" value="Genomic_DNA"/>
</dbReference>
<dbReference type="PIR" id="E64122">
    <property type="entry name" value="E64122"/>
</dbReference>
<dbReference type="RefSeq" id="NP_439574.1">
    <property type="nucleotide sequence ID" value="NC_000907.1"/>
</dbReference>
<dbReference type="SMR" id="P45199"/>
<dbReference type="STRING" id="71421.HI_1425"/>
<dbReference type="EnsemblBacteria" id="AAC23062">
    <property type="protein sequence ID" value="AAC23062"/>
    <property type="gene ID" value="HI_1425"/>
</dbReference>
<dbReference type="KEGG" id="hin:HI_1425"/>
<dbReference type="PATRIC" id="fig|71421.8.peg.1482"/>
<dbReference type="eggNOG" id="COG0664">
    <property type="taxonomic scope" value="Bacteria"/>
</dbReference>
<dbReference type="HOGENOM" id="CLU_075053_0_2_6"/>
<dbReference type="OrthoDB" id="7643467at2"/>
<dbReference type="PhylomeDB" id="P45199"/>
<dbReference type="BioCyc" id="HINF71421:G1GJ1-1448-MONOMER"/>
<dbReference type="Proteomes" id="UP000000579">
    <property type="component" value="Chromosome"/>
</dbReference>
<dbReference type="GO" id="GO:0005829">
    <property type="term" value="C:cytosol"/>
    <property type="evidence" value="ECO:0000318"/>
    <property type="project" value="GO_Central"/>
</dbReference>
<dbReference type="GO" id="GO:0051539">
    <property type="term" value="F:4 iron, 4 sulfur cluster binding"/>
    <property type="evidence" value="ECO:0007669"/>
    <property type="project" value="UniProtKB-KW"/>
</dbReference>
<dbReference type="GO" id="GO:0003677">
    <property type="term" value="F:DNA binding"/>
    <property type="evidence" value="ECO:0007669"/>
    <property type="project" value="UniProtKB-KW"/>
</dbReference>
<dbReference type="GO" id="GO:0003700">
    <property type="term" value="F:DNA-binding transcription factor activity"/>
    <property type="evidence" value="ECO:0000318"/>
    <property type="project" value="GO_Central"/>
</dbReference>
<dbReference type="GO" id="GO:0046872">
    <property type="term" value="F:metal ion binding"/>
    <property type="evidence" value="ECO:0007669"/>
    <property type="project" value="UniProtKB-KW"/>
</dbReference>
<dbReference type="CDD" id="cd00038">
    <property type="entry name" value="CAP_ED"/>
    <property type="match status" value="1"/>
</dbReference>
<dbReference type="CDD" id="cd00092">
    <property type="entry name" value="HTH_CRP"/>
    <property type="match status" value="1"/>
</dbReference>
<dbReference type="FunFam" id="1.10.10.10:FF:000028">
    <property type="entry name" value="Fumarate/nitrate reduction transcriptional regulator Fnr"/>
    <property type="match status" value="1"/>
</dbReference>
<dbReference type="FunFam" id="2.60.120.10:FF:000004">
    <property type="entry name" value="Fumarate/nitrate reduction transcriptional regulator Fnr"/>
    <property type="match status" value="1"/>
</dbReference>
<dbReference type="Gene3D" id="2.60.120.10">
    <property type="entry name" value="Jelly Rolls"/>
    <property type="match status" value="1"/>
</dbReference>
<dbReference type="Gene3D" id="1.10.10.10">
    <property type="entry name" value="Winged helix-like DNA-binding domain superfamily/Winged helix DNA-binding domain"/>
    <property type="match status" value="1"/>
</dbReference>
<dbReference type="InterPro" id="IPR000595">
    <property type="entry name" value="cNMP-bd_dom"/>
</dbReference>
<dbReference type="InterPro" id="IPR018490">
    <property type="entry name" value="cNMP-bd_dom_sf"/>
</dbReference>
<dbReference type="InterPro" id="IPR050397">
    <property type="entry name" value="Env_Response_Regulators"/>
</dbReference>
<dbReference type="InterPro" id="IPR012318">
    <property type="entry name" value="HTH_CRP"/>
</dbReference>
<dbReference type="InterPro" id="IPR014710">
    <property type="entry name" value="RmlC-like_jellyroll"/>
</dbReference>
<dbReference type="InterPro" id="IPR018335">
    <property type="entry name" value="Tscrpt_reg_HTH_Crp-type_CS"/>
</dbReference>
<dbReference type="InterPro" id="IPR036388">
    <property type="entry name" value="WH-like_DNA-bd_sf"/>
</dbReference>
<dbReference type="InterPro" id="IPR036390">
    <property type="entry name" value="WH_DNA-bd_sf"/>
</dbReference>
<dbReference type="NCBIfam" id="NF008365">
    <property type="entry name" value="PRK11161.1"/>
    <property type="match status" value="1"/>
</dbReference>
<dbReference type="PANTHER" id="PTHR24567">
    <property type="entry name" value="CRP FAMILY TRANSCRIPTIONAL REGULATORY PROTEIN"/>
    <property type="match status" value="1"/>
</dbReference>
<dbReference type="PANTHER" id="PTHR24567:SF75">
    <property type="entry name" value="FUMARATE AND NITRATE REDUCTION REGULATORY PROTEIN"/>
    <property type="match status" value="1"/>
</dbReference>
<dbReference type="Pfam" id="PF00027">
    <property type="entry name" value="cNMP_binding"/>
    <property type="match status" value="1"/>
</dbReference>
<dbReference type="Pfam" id="PF13545">
    <property type="entry name" value="HTH_Crp_2"/>
    <property type="match status" value="1"/>
</dbReference>
<dbReference type="PRINTS" id="PR00034">
    <property type="entry name" value="HTHCRP"/>
</dbReference>
<dbReference type="SMART" id="SM00100">
    <property type="entry name" value="cNMP"/>
    <property type="match status" value="1"/>
</dbReference>
<dbReference type="SMART" id="SM00419">
    <property type="entry name" value="HTH_CRP"/>
    <property type="match status" value="1"/>
</dbReference>
<dbReference type="SUPFAM" id="SSF51206">
    <property type="entry name" value="cAMP-binding domain-like"/>
    <property type="match status" value="1"/>
</dbReference>
<dbReference type="SUPFAM" id="SSF46785">
    <property type="entry name" value="Winged helix' DNA-binding domain"/>
    <property type="match status" value="1"/>
</dbReference>
<dbReference type="PROSITE" id="PS50042">
    <property type="entry name" value="CNMP_BINDING_3"/>
    <property type="match status" value="1"/>
</dbReference>
<dbReference type="PROSITE" id="PS00042">
    <property type="entry name" value="HTH_CRP_1"/>
    <property type="match status" value="1"/>
</dbReference>
<dbReference type="PROSITE" id="PS51063">
    <property type="entry name" value="HTH_CRP_2"/>
    <property type="match status" value="1"/>
</dbReference>
<organism>
    <name type="scientific">Haemophilus influenzae (strain ATCC 51907 / DSM 11121 / KW20 / Rd)</name>
    <dbReference type="NCBI Taxonomy" id="71421"/>
    <lineage>
        <taxon>Bacteria</taxon>
        <taxon>Pseudomonadati</taxon>
        <taxon>Pseudomonadota</taxon>
        <taxon>Gammaproteobacteria</taxon>
        <taxon>Pasteurellales</taxon>
        <taxon>Pasteurellaceae</taxon>
        <taxon>Haemophilus</taxon>
    </lineage>
</organism>
<name>FNR_HAEIN</name>